<dbReference type="EMBL" id="CP000422">
    <property type="protein sequence ID" value="ABJ68442.1"/>
    <property type="molecule type" value="Genomic_DNA"/>
</dbReference>
<dbReference type="RefSeq" id="WP_011673654.1">
    <property type="nucleotide sequence ID" value="NC_008525.1"/>
</dbReference>
<dbReference type="SMR" id="Q03ED0"/>
<dbReference type="STRING" id="278197.PEPE_1404"/>
<dbReference type="GeneID" id="33062514"/>
<dbReference type="KEGG" id="ppe:PEPE_1404"/>
<dbReference type="eggNOG" id="COG0096">
    <property type="taxonomic scope" value="Bacteria"/>
</dbReference>
<dbReference type="HOGENOM" id="CLU_098428_0_2_9"/>
<dbReference type="OrthoDB" id="9802617at2"/>
<dbReference type="Proteomes" id="UP000000773">
    <property type="component" value="Chromosome"/>
</dbReference>
<dbReference type="GO" id="GO:1990904">
    <property type="term" value="C:ribonucleoprotein complex"/>
    <property type="evidence" value="ECO:0007669"/>
    <property type="project" value="UniProtKB-KW"/>
</dbReference>
<dbReference type="GO" id="GO:0005840">
    <property type="term" value="C:ribosome"/>
    <property type="evidence" value="ECO:0007669"/>
    <property type="project" value="UniProtKB-KW"/>
</dbReference>
<dbReference type="GO" id="GO:0019843">
    <property type="term" value="F:rRNA binding"/>
    <property type="evidence" value="ECO:0007669"/>
    <property type="project" value="UniProtKB-UniRule"/>
</dbReference>
<dbReference type="GO" id="GO:0003735">
    <property type="term" value="F:structural constituent of ribosome"/>
    <property type="evidence" value="ECO:0007669"/>
    <property type="project" value="InterPro"/>
</dbReference>
<dbReference type="GO" id="GO:0006412">
    <property type="term" value="P:translation"/>
    <property type="evidence" value="ECO:0007669"/>
    <property type="project" value="UniProtKB-UniRule"/>
</dbReference>
<dbReference type="FunFam" id="3.30.1370.30:FF:000002">
    <property type="entry name" value="30S ribosomal protein S8"/>
    <property type="match status" value="1"/>
</dbReference>
<dbReference type="FunFam" id="3.30.1490.10:FF:000001">
    <property type="entry name" value="30S ribosomal protein S8"/>
    <property type="match status" value="1"/>
</dbReference>
<dbReference type="Gene3D" id="3.30.1370.30">
    <property type="match status" value="1"/>
</dbReference>
<dbReference type="Gene3D" id="3.30.1490.10">
    <property type="match status" value="1"/>
</dbReference>
<dbReference type="HAMAP" id="MF_01302_B">
    <property type="entry name" value="Ribosomal_uS8_B"/>
    <property type="match status" value="1"/>
</dbReference>
<dbReference type="InterPro" id="IPR000630">
    <property type="entry name" value="Ribosomal_uS8"/>
</dbReference>
<dbReference type="InterPro" id="IPR047863">
    <property type="entry name" value="Ribosomal_uS8_CS"/>
</dbReference>
<dbReference type="InterPro" id="IPR035987">
    <property type="entry name" value="Ribosomal_uS8_sf"/>
</dbReference>
<dbReference type="NCBIfam" id="NF001109">
    <property type="entry name" value="PRK00136.1"/>
    <property type="match status" value="1"/>
</dbReference>
<dbReference type="PANTHER" id="PTHR11758">
    <property type="entry name" value="40S RIBOSOMAL PROTEIN S15A"/>
    <property type="match status" value="1"/>
</dbReference>
<dbReference type="Pfam" id="PF00410">
    <property type="entry name" value="Ribosomal_S8"/>
    <property type="match status" value="1"/>
</dbReference>
<dbReference type="SUPFAM" id="SSF56047">
    <property type="entry name" value="Ribosomal protein S8"/>
    <property type="match status" value="1"/>
</dbReference>
<dbReference type="PROSITE" id="PS00053">
    <property type="entry name" value="RIBOSOMAL_S8"/>
    <property type="match status" value="1"/>
</dbReference>
<proteinExistence type="inferred from homology"/>
<keyword id="KW-0687">Ribonucleoprotein</keyword>
<keyword id="KW-0689">Ribosomal protein</keyword>
<keyword id="KW-0694">RNA-binding</keyword>
<keyword id="KW-0699">rRNA-binding</keyword>
<evidence type="ECO:0000255" key="1">
    <source>
        <dbReference type="HAMAP-Rule" id="MF_01302"/>
    </source>
</evidence>
<evidence type="ECO:0000305" key="2"/>
<name>RS8_PEDPA</name>
<accession>Q03ED0</accession>
<reference key="1">
    <citation type="journal article" date="2006" name="Proc. Natl. Acad. Sci. U.S.A.">
        <title>Comparative genomics of the lactic acid bacteria.</title>
        <authorList>
            <person name="Makarova K.S."/>
            <person name="Slesarev A."/>
            <person name="Wolf Y.I."/>
            <person name="Sorokin A."/>
            <person name="Mirkin B."/>
            <person name="Koonin E.V."/>
            <person name="Pavlov A."/>
            <person name="Pavlova N."/>
            <person name="Karamychev V."/>
            <person name="Polouchine N."/>
            <person name="Shakhova V."/>
            <person name="Grigoriev I."/>
            <person name="Lou Y."/>
            <person name="Rohksar D."/>
            <person name="Lucas S."/>
            <person name="Huang K."/>
            <person name="Goodstein D.M."/>
            <person name="Hawkins T."/>
            <person name="Plengvidhya V."/>
            <person name="Welker D."/>
            <person name="Hughes J."/>
            <person name="Goh Y."/>
            <person name="Benson A."/>
            <person name="Baldwin K."/>
            <person name="Lee J.-H."/>
            <person name="Diaz-Muniz I."/>
            <person name="Dosti B."/>
            <person name="Smeianov V."/>
            <person name="Wechter W."/>
            <person name="Barabote R."/>
            <person name="Lorca G."/>
            <person name="Altermann E."/>
            <person name="Barrangou R."/>
            <person name="Ganesan B."/>
            <person name="Xie Y."/>
            <person name="Rawsthorne H."/>
            <person name="Tamir D."/>
            <person name="Parker C."/>
            <person name="Breidt F."/>
            <person name="Broadbent J.R."/>
            <person name="Hutkins R."/>
            <person name="O'Sullivan D."/>
            <person name="Steele J."/>
            <person name="Unlu G."/>
            <person name="Saier M.H. Jr."/>
            <person name="Klaenhammer T."/>
            <person name="Richardson P."/>
            <person name="Kozyavkin S."/>
            <person name="Weimer B.C."/>
            <person name="Mills D.A."/>
        </authorList>
    </citation>
    <scope>NUCLEOTIDE SEQUENCE [LARGE SCALE GENOMIC DNA]</scope>
    <source>
        <strain>ATCC 25745 / CCUG 21536 / LMG 10740 / 183-1w</strain>
    </source>
</reference>
<feature type="chain" id="PRO_0000290894" description="Small ribosomal subunit protein uS8">
    <location>
        <begin position="1"/>
        <end position="132"/>
    </location>
</feature>
<protein>
    <recommendedName>
        <fullName evidence="1">Small ribosomal subunit protein uS8</fullName>
    </recommendedName>
    <alternativeName>
        <fullName evidence="2">30S ribosomal protein S8</fullName>
    </alternativeName>
</protein>
<gene>
    <name evidence="1" type="primary">rpsH</name>
    <name type="ordered locus">PEPE_1404</name>
</gene>
<organism>
    <name type="scientific">Pediococcus pentosaceus (strain ATCC 25745 / CCUG 21536 / LMG 10740 / 183-1w)</name>
    <dbReference type="NCBI Taxonomy" id="278197"/>
    <lineage>
        <taxon>Bacteria</taxon>
        <taxon>Bacillati</taxon>
        <taxon>Bacillota</taxon>
        <taxon>Bacilli</taxon>
        <taxon>Lactobacillales</taxon>
        <taxon>Lactobacillaceae</taxon>
        <taxon>Pediococcus</taxon>
    </lineage>
</organism>
<comment type="function">
    <text evidence="1">One of the primary rRNA binding proteins, it binds directly to 16S rRNA central domain where it helps coordinate assembly of the platform of the 30S subunit.</text>
</comment>
<comment type="subunit">
    <text evidence="1">Part of the 30S ribosomal subunit. Contacts proteins S5 and S12.</text>
</comment>
<comment type="similarity">
    <text evidence="1">Belongs to the universal ribosomal protein uS8 family.</text>
</comment>
<sequence length="132" mass="14822">MSMTDPIADFLTRIRNANMVRHESLEVPASKIKKDMAEILKNEGFIKDVEYIEDDKQGIIRVFLKYGKNNERVISGLKRISKPGLRSYVKSDEVPKVLNGLGIAIISTSEGVITDKEARAKKIGGEVLAYIW</sequence>